<feature type="chain" id="PRO_0000143957" description="UPF0292 protein TK1411">
    <location>
        <begin position="1"/>
        <end position="133"/>
    </location>
</feature>
<feature type="domain" description="Toprim" evidence="1">
    <location>
        <begin position="20"/>
        <end position="100"/>
    </location>
</feature>
<feature type="binding site" evidence="1">
    <location>
        <position position="26"/>
    </location>
    <ligand>
        <name>Mg(2+)</name>
        <dbReference type="ChEBI" id="CHEBI:18420"/>
        <label>1</label>
        <note>catalytic</note>
    </ligand>
</feature>
<feature type="binding site" evidence="1">
    <location>
        <position position="69"/>
    </location>
    <ligand>
        <name>Mg(2+)</name>
        <dbReference type="ChEBI" id="CHEBI:18420"/>
        <label>1</label>
        <note>catalytic</note>
    </ligand>
</feature>
<feature type="binding site" evidence="1">
    <location>
        <position position="69"/>
    </location>
    <ligand>
        <name>Mg(2+)</name>
        <dbReference type="ChEBI" id="CHEBI:18420"/>
        <label>2</label>
    </ligand>
</feature>
<feature type="binding site" evidence="1">
    <location>
        <position position="71"/>
    </location>
    <ligand>
        <name>Mg(2+)</name>
        <dbReference type="ChEBI" id="CHEBI:18420"/>
        <label>2</label>
    </ligand>
</feature>
<accession>Q5JH13</accession>
<protein>
    <recommendedName>
        <fullName evidence="1">UPF0292 protein TK1411</fullName>
    </recommendedName>
</protein>
<sequence>MYPENYKRFLELIDKLREFEGALIVEGLRDEVALRNLGVRAEIIRLSRLPLSEVALIASSHKEVMILTDFDKKGEELAKKLLNYLAGYPCSVDIETWKELRKLVRKDIKGVEDLYGLYLRVVSVSDPLLEGIQ</sequence>
<name>Y1411_THEKO</name>
<evidence type="ECO:0000255" key="1">
    <source>
        <dbReference type="HAMAP-Rule" id="MF_01095"/>
    </source>
</evidence>
<gene>
    <name type="ordered locus">TK1411</name>
</gene>
<organism>
    <name type="scientific">Thermococcus kodakarensis (strain ATCC BAA-918 / JCM 12380 / KOD1)</name>
    <name type="common">Pyrococcus kodakaraensis (strain KOD1)</name>
    <dbReference type="NCBI Taxonomy" id="69014"/>
    <lineage>
        <taxon>Archaea</taxon>
        <taxon>Methanobacteriati</taxon>
        <taxon>Methanobacteriota</taxon>
        <taxon>Thermococci</taxon>
        <taxon>Thermococcales</taxon>
        <taxon>Thermococcaceae</taxon>
        <taxon>Thermococcus</taxon>
    </lineage>
</organism>
<dbReference type="EMBL" id="AP006878">
    <property type="protein sequence ID" value="BAD85600.1"/>
    <property type="molecule type" value="Genomic_DNA"/>
</dbReference>
<dbReference type="RefSeq" id="WP_011250362.1">
    <property type="nucleotide sequence ID" value="NC_006624.1"/>
</dbReference>
<dbReference type="SMR" id="Q5JH13"/>
<dbReference type="STRING" id="69014.TK1411"/>
<dbReference type="EnsemblBacteria" id="BAD85600">
    <property type="protein sequence ID" value="BAD85600"/>
    <property type="gene ID" value="TK1411"/>
</dbReference>
<dbReference type="GeneID" id="78447931"/>
<dbReference type="KEGG" id="tko:TK1411"/>
<dbReference type="PATRIC" id="fig|69014.16.peg.1373"/>
<dbReference type="eggNOG" id="arCOG01486">
    <property type="taxonomic scope" value="Archaea"/>
</dbReference>
<dbReference type="HOGENOM" id="CLU_140789_3_0_2"/>
<dbReference type="InParanoid" id="Q5JH13"/>
<dbReference type="OrthoDB" id="56459at2157"/>
<dbReference type="PhylomeDB" id="Q5JH13"/>
<dbReference type="Proteomes" id="UP000000536">
    <property type="component" value="Chromosome"/>
</dbReference>
<dbReference type="GO" id="GO:0046872">
    <property type="term" value="F:metal ion binding"/>
    <property type="evidence" value="ECO:0007669"/>
    <property type="project" value="UniProtKB-KW"/>
</dbReference>
<dbReference type="CDD" id="cd01027">
    <property type="entry name" value="TOPRIM_RNase_M5_like"/>
    <property type="match status" value="1"/>
</dbReference>
<dbReference type="Gene3D" id="3.40.1360.10">
    <property type="match status" value="1"/>
</dbReference>
<dbReference type="HAMAP" id="MF_01095">
    <property type="entry name" value="UPF0292"/>
    <property type="match status" value="1"/>
</dbReference>
<dbReference type="InterPro" id="IPR006171">
    <property type="entry name" value="TOPRIM_dom"/>
</dbReference>
<dbReference type="InterPro" id="IPR034141">
    <property type="entry name" value="TOPRIM_RNase_M5-like"/>
</dbReference>
<dbReference type="InterPro" id="IPR022972">
    <property type="entry name" value="UPF0292"/>
</dbReference>
<dbReference type="NCBIfam" id="NF003090">
    <property type="entry name" value="PRK04017.1-1"/>
    <property type="match status" value="1"/>
</dbReference>
<dbReference type="PANTHER" id="PTHR39964:SF2">
    <property type="entry name" value="UPF0292 PROTEIN MJ1624"/>
    <property type="match status" value="1"/>
</dbReference>
<dbReference type="PANTHER" id="PTHR39964">
    <property type="entry name" value="UPF0292 PROTEIN TK1411"/>
    <property type="match status" value="1"/>
</dbReference>
<dbReference type="Pfam" id="PF01751">
    <property type="entry name" value="Toprim"/>
    <property type="match status" value="1"/>
</dbReference>
<dbReference type="SMART" id="SM00493">
    <property type="entry name" value="TOPRIM"/>
    <property type="match status" value="1"/>
</dbReference>
<dbReference type="SUPFAM" id="SSF110455">
    <property type="entry name" value="Toprim domain"/>
    <property type="match status" value="1"/>
</dbReference>
<dbReference type="PROSITE" id="PS50880">
    <property type="entry name" value="TOPRIM"/>
    <property type="match status" value="1"/>
</dbReference>
<reference key="1">
    <citation type="journal article" date="2005" name="Genome Res.">
        <title>Complete genome sequence of the hyperthermophilic archaeon Thermococcus kodakaraensis KOD1 and comparison with Pyrococcus genomes.</title>
        <authorList>
            <person name="Fukui T."/>
            <person name="Atomi H."/>
            <person name="Kanai T."/>
            <person name="Matsumi R."/>
            <person name="Fujiwara S."/>
            <person name="Imanaka T."/>
        </authorList>
    </citation>
    <scope>NUCLEOTIDE SEQUENCE [LARGE SCALE GENOMIC DNA]</scope>
    <source>
        <strain>ATCC BAA-918 / JCM 12380 / KOD1</strain>
    </source>
</reference>
<proteinExistence type="inferred from homology"/>
<comment type="cofactor">
    <cofactor evidence="1">
        <name>Mg(2+)</name>
        <dbReference type="ChEBI" id="CHEBI:18420"/>
    </cofactor>
    <text evidence="1">Binds two Mg(2+) per subunit.</text>
</comment>
<comment type="similarity">
    <text evidence="1">Belongs to the UPF0292 family.</text>
</comment>
<keyword id="KW-0460">Magnesium</keyword>
<keyword id="KW-0479">Metal-binding</keyword>
<keyword id="KW-1185">Reference proteome</keyword>